<dbReference type="EMBL" id="CR857552">
    <property type="protein sequence ID" value="CAH89830.1"/>
    <property type="molecule type" value="mRNA"/>
</dbReference>
<dbReference type="RefSeq" id="NP_001124849.1">
    <property type="nucleotide sequence ID" value="NM_001131377.1"/>
</dbReference>
<dbReference type="RefSeq" id="XP_009246786.1">
    <property type="nucleotide sequence ID" value="XM_009248511.1"/>
</dbReference>
<dbReference type="RefSeq" id="XP_063572351.1">
    <property type="nucleotide sequence ID" value="XM_063716281.1"/>
</dbReference>
<dbReference type="SMR" id="Q5REH7"/>
<dbReference type="FunCoup" id="Q5REH7">
    <property type="interactions" value="1587"/>
</dbReference>
<dbReference type="STRING" id="9601.ENSPPYP00000001395"/>
<dbReference type="GeneID" id="100171710"/>
<dbReference type="KEGG" id="pon:100171710"/>
<dbReference type="CTD" id="2787"/>
<dbReference type="eggNOG" id="KOG4119">
    <property type="taxonomic scope" value="Eukaryota"/>
</dbReference>
<dbReference type="HOGENOM" id="CLU_168377_3_0_1"/>
<dbReference type="InParanoid" id="Q5REH7"/>
<dbReference type="OrthoDB" id="6264244at2759"/>
<dbReference type="TreeFam" id="TF319909"/>
<dbReference type="Proteomes" id="UP000001595">
    <property type="component" value="Chromosome 11"/>
</dbReference>
<dbReference type="GO" id="GO:0005834">
    <property type="term" value="C:heterotrimeric G-protein complex"/>
    <property type="evidence" value="ECO:0007669"/>
    <property type="project" value="InterPro"/>
</dbReference>
<dbReference type="GO" id="GO:0031681">
    <property type="term" value="F:G-protein beta-subunit binding"/>
    <property type="evidence" value="ECO:0007669"/>
    <property type="project" value="InterPro"/>
</dbReference>
<dbReference type="GO" id="GO:0007186">
    <property type="term" value="P:G protein-coupled receptor signaling pathway"/>
    <property type="evidence" value="ECO:0007669"/>
    <property type="project" value="InterPro"/>
</dbReference>
<dbReference type="CDD" id="cd00068">
    <property type="entry name" value="GGL"/>
    <property type="match status" value="1"/>
</dbReference>
<dbReference type="FunFam" id="4.10.260.10:FF:000001">
    <property type="entry name" value="Guanine nucleotide-binding protein subunit gamma"/>
    <property type="match status" value="1"/>
</dbReference>
<dbReference type="Gene3D" id="4.10.260.10">
    <property type="entry name" value="Transducin (heterotrimeric G protein), gamma chain"/>
    <property type="match status" value="1"/>
</dbReference>
<dbReference type="InterPro" id="IPR015898">
    <property type="entry name" value="G-protein_gamma-like_dom"/>
</dbReference>
<dbReference type="InterPro" id="IPR036284">
    <property type="entry name" value="GGL_sf"/>
</dbReference>
<dbReference type="InterPro" id="IPR001770">
    <property type="entry name" value="Gprotein-gamma"/>
</dbReference>
<dbReference type="PANTHER" id="PTHR13809">
    <property type="entry name" value="GUANINE NUCLEOTIDE-BINDING PROTEIN GAMMA SUBUNIT"/>
    <property type="match status" value="1"/>
</dbReference>
<dbReference type="Pfam" id="PF00631">
    <property type="entry name" value="G-gamma"/>
    <property type="match status" value="1"/>
</dbReference>
<dbReference type="PRINTS" id="PR00321">
    <property type="entry name" value="GPROTEING"/>
</dbReference>
<dbReference type="SMART" id="SM01224">
    <property type="entry name" value="G_gamma"/>
    <property type="match status" value="1"/>
</dbReference>
<dbReference type="SMART" id="SM00224">
    <property type="entry name" value="GGL"/>
    <property type="match status" value="1"/>
</dbReference>
<dbReference type="SUPFAM" id="SSF48670">
    <property type="entry name" value="Transducin (heterotrimeric G protein), gamma chain"/>
    <property type="match status" value="1"/>
</dbReference>
<dbReference type="PROSITE" id="PS50058">
    <property type="entry name" value="G_PROTEIN_GAMMA"/>
    <property type="match status" value="1"/>
</dbReference>
<protein>
    <recommendedName>
        <fullName>Guanine nucleotide-binding protein G(I)/G(S)/G(O) subunit gamma-5</fullName>
    </recommendedName>
</protein>
<reference key="1">
    <citation type="submission" date="2004-11" db="EMBL/GenBank/DDBJ databases">
        <authorList>
            <consortium name="The German cDNA consortium"/>
        </authorList>
    </citation>
    <scope>NUCLEOTIDE SEQUENCE [LARGE SCALE MRNA]</scope>
    <source>
        <tissue>Heart</tissue>
    </source>
</reference>
<organism>
    <name type="scientific">Pongo abelii</name>
    <name type="common">Sumatran orangutan</name>
    <name type="synonym">Pongo pygmaeus abelii</name>
    <dbReference type="NCBI Taxonomy" id="9601"/>
    <lineage>
        <taxon>Eukaryota</taxon>
        <taxon>Metazoa</taxon>
        <taxon>Chordata</taxon>
        <taxon>Craniata</taxon>
        <taxon>Vertebrata</taxon>
        <taxon>Euteleostomi</taxon>
        <taxon>Mammalia</taxon>
        <taxon>Eutheria</taxon>
        <taxon>Euarchontoglires</taxon>
        <taxon>Primates</taxon>
        <taxon>Haplorrhini</taxon>
        <taxon>Catarrhini</taxon>
        <taxon>Hominidae</taxon>
        <taxon>Pongo</taxon>
    </lineage>
</organism>
<proteinExistence type="inferred from homology"/>
<name>GBG5_PONAB</name>
<accession>Q5REH7</accession>
<sequence>MSGSSSVAAMKKVVQQLRLEAGLNRVKVSQAAADLKQFCLQNAQHDPLLTGVSSSTNPFRPQKVCSFL</sequence>
<gene>
    <name type="primary">GNG5</name>
</gene>
<evidence type="ECO:0000250" key="1"/>
<evidence type="ECO:0000250" key="2">
    <source>
        <dbReference type="UniProtKB" id="P63218"/>
    </source>
</evidence>
<evidence type="ECO:0000305" key="3"/>
<comment type="function">
    <text>Guanine nucleotide-binding proteins (G proteins) are involved as a modulator or transducer in various transmembrane signaling systems. The beta and gamma chains are required for the GTPase activity, for replacement of GDP by GTP, and for G protein-effector interaction.</text>
</comment>
<comment type="subunit">
    <text>G proteins are composed of 3 units, alpha, beta and gamma.</text>
</comment>
<comment type="subcellular location">
    <subcellularLocation>
        <location evidence="3">Cell membrane</location>
        <topology evidence="3">Lipid-anchor</topology>
        <orientation evidence="3">Cytoplasmic side</orientation>
    </subcellularLocation>
</comment>
<comment type="similarity">
    <text evidence="3">Belongs to the G protein gamma family.</text>
</comment>
<feature type="initiator methionine" description="Removed" evidence="2">
    <location>
        <position position="1"/>
    </location>
</feature>
<feature type="chain" id="PRO_0000042173" description="Guanine nucleotide-binding protein G(I)/G(S)/G(O) subunit gamma-5">
    <location>
        <begin position="2"/>
        <end position="65"/>
    </location>
</feature>
<feature type="propeptide" id="PRO_0000042174" description="Removed in mature form" evidence="1">
    <location>
        <begin position="66"/>
        <end position="68"/>
    </location>
</feature>
<feature type="modified residue" description="N-acetylserine" evidence="2">
    <location>
        <position position="2"/>
    </location>
</feature>
<feature type="modified residue" description="Phosphoserine" evidence="2">
    <location>
        <position position="2"/>
    </location>
</feature>
<feature type="modified residue" description="Cysteine methyl ester" evidence="1">
    <location>
        <position position="65"/>
    </location>
</feature>
<feature type="lipid moiety-binding region" description="S-geranylgeranyl cysteine" evidence="1">
    <location>
        <position position="65"/>
    </location>
</feature>
<keyword id="KW-0007">Acetylation</keyword>
<keyword id="KW-1003">Cell membrane</keyword>
<keyword id="KW-0449">Lipoprotein</keyword>
<keyword id="KW-0472">Membrane</keyword>
<keyword id="KW-0488">Methylation</keyword>
<keyword id="KW-0597">Phosphoprotein</keyword>
<keyword id="KW-0636">Prenylation</keyword>
<keyword id="KW-1185">Reference proteome</keyword>
<keyword id="KW-0807">Transducer</keyword>